<gene>
    <name type="ordered locus">YML116W-A</name>
    <name type="ORF">YML117W-A</name>
</gene>
<sequence>MAKQQITERRREDLLQGIERYQDLTSWPNTLHKCNIRHLCMQPIFWAPLRKTTRILTSSIAVLSLKYNAYPSDYLDKAQGSLRRPAKVFLPFFLRFLCIN</sequence>
<organism>
    <name type="scientific">Saccharomyces cerevisiae (strain ATCC 204508 / S288c)</name>
    <name type="common">Baker's yeast</name>
    <dbReference type="NCBI Taxonomy" id="559292"/>
    <lineage>
        <taxon>Eukaryota</taxon>
        <taxon>Fungi</taxon>
        <taxon>Dikarya</taxon>
        <taxon>Ascomycota</taxon>
        <taxon>Saccharomycotina</taxon>
        <taxon>Saccharomycetes</taxon>
        <taxon>Saccharomycetales</taxon>
        <taxon>Saccharomycetaceae</taxon>
        <taxon>Saccharomyces</taxon>
    </lineage>
</organism>
<proteinExistence type="uncertain"/>
<evidence type="ECO:0000305" key="1"/>
<evidence type="ECO:0000305" key="2">
    <source>
    </source>
</evidence>
<accession>Q6B108</accession>
<name>YM116_YEAST</name>
<dbReference type="EMBL" id="Z49210">
    <property type="status" value="NOT_ANNOTATED_CDS"/>
    <property type="molecule type" value="Genomic_DNA"/>
</dbReference>
<dbReference type="EMBL" id="AY693272">
    <property type="protein sequence ID" value="AAT93291.1"/>
    <property type="molecule type" value="Genomic_DNA"/>
</dbReference>
<dbReference type="PaxDb" id="4932-YML116W-A"/>
<dbReference type="EnsemblFungi" id="YML116W-A_mRNA">
    <property type="protein sequence ID" value="YML116W-A"/>
    <property type="gene ID" value="YML116W-A"/>
</dbReference>
<dbReference type="AGR" id="SGD:S000004586"/>
<dbReference type="SGD" id="S000004586">
    <property type="gene designation" value="YML116W-A"/>
</dbReference>
<dbReference type="HOGENOM" id="CLU_2307652_0_0_1"/>
<protein>
    <recommendedName>
        <fullName>Putative uncharacterized protein YML116W-A</fullName>
    </recommendedName>
</protein>
<comment type="miscellaneous">
    <text evidence="1">Partially overlaps NAB6.</text>
</comment>
<comment type="caution">
    <text evidence="2">Product of a dubious gene prediction unlikely to encode a functional protein. Because of that it is not part of the S.cerevisiae S288c complete/reference proteome set.</text>
</comment>
<reference key="1">
    <citation type="journal article" date="1997" name="Nature">
        <title>The nucleotide sequence of Saccharomyces cerevisiae chromosome XIII.</title>
        <authorList>
            <person name="Bowman S."/>
            <person name="Churcher C.M."/>
            <person name="Badcock K."/>
            <person name="Brown D."/>
            <person name="Chillingworth T."/>
            <person name="Connor R."/>
            <person name="Dedman K."/>
            <person name="Devlin K."/>
            <person name="Gentles S."/>
            <person name="Hamlin N."/>
            <person name="Hunt S."/>
            <person name="Jagels K."/>
            <person name="Lye G."/>
            <person name="Moule S."/>
            <person name="Odell C."/>
            <person name="Pearson D."/>
            <person name="Rajandream M.A."/>
            <person name="Rice P."/>
            <person name="Skelton J."/>
            <person name="Walsh S.V."/>
            <person name="Whitehead S."/>
            <person name="Barrell B.G."/>
        </authorList>
    </citation>
    <scope>NUCLEOTIDE SEQUENCE [LARGE SCALE GENOMIC DNA]</scope>
    <source>
        <strain>ATCC 204508 / S288c</strain>
    </source>
</reference>
<reference key="2">
    <citation type="journal article" date="2014" name="G3 (Bethesda)">
        <title>The reference genome sequence of Saccharomyces cerevisiae: Then and now.</title>
        <authorList>
            <person name="Engel S.R."/>
            <person name="Dietrich F.S."/>
            <person name="Fisk D.G."/>
            <person name="Binkley G."/>
            <person name="Balakrishnan R."/>
            <person name="Costanzo M.C."/>
            <person name="Dwight S.S."/>
            <person name="Hitz B.C."/>
            <person name="Karra K."/>
            <person name="Nash R.S."/>
            <person name="Weng S."/>
            <person name="Wong E.D."/>
            <person name="Lloyd P."/>
            <person name="Skrzypek M.S."/>
            <person name="Miyasato S.R."/>
            <person name="Simison M."/>
            <person name="Cherry J.M."/>
        </authorList>
    </citation>
    <scope>GENOME REANNOTATION</scope>
    <source>
        <strain>ATCC 204508 / S288c</strain>
    </source>
</reference>
<reference key="3">
    <citation type="journal article" date="2007" name="Genome Res.">
        <title>Approaching a complete repository of sequence-verified protein-encoding clones for Saccharomyces cerevisiae.</title>
        <authorList>
            <person name="Hu Y."/>
            <person name="Rolfs A."/>
            <person name="Bhullar B."/>
            <person name="Murthy T.V.S."/>
            <person name="Zhu C."/>
            <person name="Berger M.F."/>
            <person name="Camargo A.A."/>
            <person name="Kelley F."/>
            <person name="McCarron S."/>
            <person name="Jepson D."/>
            <person name="Richardson A."/>
            <person name="Raphael J."/>
            <person name="Moreira D."/>
            <person name="Taycher E."/>
            <person name="Zuo D."/>
            <person name="Mohr S."/>
            <person name="Kane M.F."/>
            <person name="Williamson J."/>
            <person name="Simpson A.J.G."/>
            <person name="Bulyk M.L."/>
            <person name="Harlow E."/>
            <person name="Marsischky G."/>
            <person name="Kolodner R.D."/>
            <person name="LaBaer J."/>
        </authorList>
    </citation>
    <scope>NUCLEOTIDE SEQUENCE [GENOMIC DNA]</scope>
    <source>
        <strain>ATCC 204508 / S288c</strain>
    </source>
</reference>
<feature type="chain" id="PRO_0000299660" description="Putative uncharacterized protein YML116W-A">
    <location>
        <begin position="1"/>
        <end position="100"/>
    </location>
</feature>